<keyword id="KW-0963">Cytoplasm</keyword>
<keyword id="KW-0378">Hydrolase</keyword>
<keyword id="KW-0540">Nuclease</keyword>
<keyword id="KW-1185">Reference proteome</keyword>
<keyword id="KW-0690">Ribosome biogenesis</keyword>
<proteinExistence type="inferred from homology"/>
<reference key="1">
    <citation type="submission" date="2007-10" db="EMBL/GenBank/DDBJ databases">
        <title>Complete sequence of chromosome of Desulforudis audaxviator MP104C.</title>
        <authorList>
            <person name="Copeland A."/>
            <person name="Lucas S."/>
            <person name="Lapidus A."/>
            <person name="Barry K."/>
            <person name="Glavina del Rio T."/>
            <person name="Dalin E."/>
            <person name="Tice H."/>
            <person name="Bruce D."/>
            <person name="Pitluck S."/>
            <person name="Lowry S.R."/>
            <person name="Larimer F."/>
            <person name="Land M.L."/>
            <person name="Hauser L."/>
            <person name="Kyrpides N."/>
            <person name="Ivanova N.N."/>
            <person name="Richardson P."/>
        </authorList>
    </citation>
    <scope>NUCLEOTIDE SEQUENCE [LARGE SCALE GENOMIC DNA]</scope>
    <source>
        <strain>MP104C</strain>
    </source>
</reference>
<feature type="chain" id="PRO_1000131023" description="Putative pre-16S rRNA nuclease">
    <location>
        <begin position="1"/>
        <end position="141"/>
    </location>
</feature>
<sequence length="141" mass="15770">MRLMGLDIGDRRIGVALTDENGVAAYPLEVLERTSPEKDLRRITEIIDQYGVERVVAGLPKTLSGQIGPQGDKVLSFLDKLRVRSTVPVITWDERLTTAEVEKLLVSADLGRRRRRKVVDKLAATLILNSYLNSRKSGRNT</sequence>
<name>YQGF_DESAP</name>
<protein>
    <recommendedName>
        <fullName evidence="1">Putative pre-16S rRNA nuclease</fullName>
        <ecNumber evidence="1">3.1.-.-</ecNumber>
    </recommendedName>
</protein>
<gene>
    <name type="ordered locus">Daud_0915</name>
</gene>
<organism>
    <name type="scientific">Desulforudis audaxviator (strain MP104C)</name>
    <dbReference type="NCBI Taxonomy" id="477974"/>
    <lineage>
        <taxon>Bacteria</taxon>
        <taxon>Bacillati</taxon>
        <taxon>Bacillota</taxon>
        <taxon>Clostridia</taxon>
        <taxon>Thermoanaerobacterales</taxon>
        <taxon>Candidatus Desulforudaceae</taxon>
        <taxon>Candidatus Desulforudis</taxon>
    </lineage>
</organism>
<evidence type="ECO:0000255" key="1">
    <source>
        <dbReference type="HAMAP-Rule" id="MF_00651"/>
    </source>
</evidence>
<dbReference type="EC" id="3.1.-.-" evidence="1"/>
<dbReference type="EMBL" id="CP000860">
    <property type="protein sequence ID" value="ACA59428.1"/>
    <property type="molecule type" value="Genomic_DNA"/>
</dbReference>
<dbReference type="RefSeq" id="WP_012302014.1">
    <property type="nucleotide sequence ID" value="NC_010424.1"/>
</dbReference>
<dbReference type="SMR" id="B1I373"/>
<dbReference type="STRING" id="477974.Daud_0915"/>
<dbReference type="KEGG" id="dau:Daud_0915"/>
<dbReference type="eggNOG" id="COG0816">
    <property type="taxonomic scope" value="Bacteria"/>
</dbReference>
<dbReference type="HOGENOM" id="CLU_098240_2_0_9"/>
<dbReference type="OrthoDB" id="9796140at2"/>
<dbReference type="Proteomes" id="UP000008544">
    <property type="component" value="Chromosome"/>
</dbReference>
<dbReference type="GO" id="GO:0005829">
    <property type="term" value="C:cytosol"/>
    <property type="evidence" value="ECO:0007669"/>
    <property type="project" value="TreeGrafter"/>
</dbReference>
<dbReference type="GO" id="GO:0004518">
    <property type="term" value="F:nuclease activity"/>
    <property type="evidence" value="ECO:0007669"/>
    <property type="project" value="UniProtKB-KW"/>
</dbReference>
<dbReference type="GO" id="GO:0000967">
    <property type="term" value="P:rRNA 5'-end processing"/>
    <property type="evidence" value="ECO:0007669"/>
    <property type="project" value="UniProtKB-UniRule"/>
</dbReference>
<dbReference type="CDD" id="cd16964">
    <property type="entry name" value="YqgF"/>
    <property type="match status" value="1"/>
</dbReference>
<dbReference type="Gene3D" id="3.30.420.140">
    <property type="entry name" value="YqgF/RNase H-like domain"/>
    <property type="match status" value="1"/>
</dbReference>
<dbReference type="HAMAP" id="MF_00651">
    <property type="entry name" value="Nuclease_YqgF"/>
    <property type="match status" value="1"/>
</dbReference>
<dbReference type="InterPro" id="IPR012337">
    <property type="entry name" value="RNaseH-like_sf"/>
</dbReference>
<dbReference type="InterPro" id="IPR005227">
    <property type="entry name" value="YqgF"/>
</dbReference>
<dbReference type="InterPro" id="IPR006641">
    <property type="entry name" value="YqgF/RNaseH-like_dom"/>
</dbReference>
<dbReference type="InterPro" id="IPR037027">
    <property type="entry name" value="YqgF/RNaseH-like_dom_sf"/>
</dbReference>
<dbReference type="NCBIfam" id="TIGR00250">
    <property type="entry name" value="RNAse_H_YqgF"/>
    <property type="match status" value="1"/>
</dbReference>
<dbReference type="PANTHER" id="PTHR33317">
    <property type="entry name" value="POLYNUCLEOTIDYL TRANSFERASE, RIBONUCLEASE H-LIKE SUPERFAMILY PROTEIN"/>
    <property type="match status" value="1"/>
</dbReference>
<dbReference type="PANTHER" id="PTHR33317:SF4">
    <property type="entry name" value="POLYNUCLEOTIDYL TRANSFERASE, RIBONUCLEASE H-LIKE SUPERFAMILY PROTEIN"/>
    <property type="match status" value="1"/>
</dbReference>
<dbReference type="Pfam" id="PF03652">
    <property type="entry name" value="RuvX"/>
    <property type="match status" value="1"/>
</dbReference>
<dbReference type="SMART" id="SM00732">
    <property type="entry name" value="YqgFc"/>
    <property type="match status" value="1"/>
</dbReference>
<dbReference type="SUPFAM" id="SSF53098">
    <property type="entry name" value="Ribonuclease H-like"/>
    <property type="match status" value="1"/>
</dbReference>
<comment type="function">
    <text evidence="1">Could be a nuclease involved in processing of the 5'-end of pre-16S rRNA.</text>
</comment>
<comment type="subcellular location">
    <subcellularLocation>
        <location evidence="1">Cytoplasm</location>
    </subcellularLocation>
</comment>
<comment type="similarity">
    <text evidence="1">Belongs to the YqgF nuclease family.</text>
</comment>
<accession>B1I373</accession>